<dbReference type="EC" id="4.6.1.-" evidence="6"/>
<dbReference type="EMBL" id="AY559847">
    <property type="protein sequence ID" value="AAT66076.1"/>
    <property type="molecule type" value="mRNA"/>
</dbReference>
<dbReference type="SMR" id="P0CE78"/>
<dbReference type="BRENDA" id="3.1.4.41">
    <property type="organism ID" value="3077"/>
</dbReference>
<dbReference type="GO" id="GO:0005576">
    <property type="term" value="C:extracellular region"/>
    <property type="evidence" value="ECO:0007669"/>
    <property type="project" value="UniProtKB-SubCell"/>
</dbReference>
<dbReference type="GO" id="GO:0016829">
    <property type="term" value="F:lyase activity"/>
    <property type="evidence" value="ECO:0007669"/>
    <property type="project" value="UniProtKB-KW"/>
</dbReference>
<dbReference type="GO" id="GO:0046872">
    <property type="term" value="F:metal ion binding"/>
    <property type="evidence" value="ECO:0007669"/>
    <property type="project" value="UniProtKB-KW"/>
</dbReference>
<dbReference type="GO" id="GO:0008081">
    <property type="term" value="F:phosphoric diester hydrolase activity"/>
    <property type="evidence" value="ECO:0007669"/>
    <property type="project" value="InterPro"/>
</dbReference>
<dbReference type="GO" id="GO:0090729">
    <property type="term" value="F:toxin activity"/>
    <property type="evidence" value="ECO:0007669"/>
    <property type="project" value="UniProtKB-KW"/>
</dbReference>
<dbReference type="GO" id="GO:0031640">
    <property type="term" value="P:killing of cells of another organism"/>
    <property type="evidence" value="ECO:0007669"/>
    <property type="project" value="UniProtKB-KW"/>
</dbReference>
<dbReference type="GO" id="GO:0016042">
    <property type="term" value="P:lipid catabolic process"/>
    <property type="evidence" value="ECO:0007669"/>
    <property type="project" value="UniProtKB-KW"/>
</dbReference>
<dbReference type="CDD" id="cd08576">
    <property type="entry name" value="GDPD_like_SMaseD_PLD"/>
    <property type="match status" value="1"/>
</dbReference>
<dbReference type="Gene3D" id="3.20.20.190">
    <property type="entry name" value="Phosphatidylinositol (PI) phosphodiesterase"/>
    <property type="match status" value="1"/>
</dbReference>
<dbReference type="InterPro" id="IPR017946">
    <property type="entry name" value="PLC-like_Pdiesterase_TIM-brl"/>
</dbReference>
<dbReference type="Pfam" id="PF13653">
    <property type="entry name" value="GDPD_2"/>
    <property type="match status" value="1"/>
</dbReference>
<dbReference type="SUPFAM" id="SSF51695">
    <property type="entry name" value="PLC-like phosphodiesterases"/>
    <property type="match status" value="1"/>
</dbReference>
<sequence length="279" mass="31274">ANKRPAWIMGHMVNAIYQIDEFVNLGANSIETDVSFDKDANPEYTYHGVPCDCGRSCLKWEYFSDFLKGLRKATTPGDSKYHAKLVLVVFDLKTGSLYDNQAYDAGKKLAKNLLKHYWNNGNNGGRAYIVLSIPDLNHYKLITGFKETLKSEGHPELMDKVGHDFSGNDAIGDVGNAYKKAGVTGHVWQSDGITNCLLRGLSRVKDAVKNRDSSNGFINKVYYWTVDKRATTREALDAGVDGVMTNYPDVITDVLNESAYKAKFRIATYDDNPWETFKN</sequence>
<feature type="chain" id="PRO_0000392730" description="Dermonecrotic toxin LrSicTox-alphaIA1i">
    <location>
        <begin position="1"/>
        <end position="279"/>
    </location>
</feature>
<feature type="active site" evidence="7">
    <location>
        <position position="11"/>
    </location>
</feature>
<feature type="active site" description="Nucleophile" evidence="7">
    <location>
        <position position="47"/>
    </location>
</feature>
<feature type="binding site" evidence="7">
    <location>
        <position position="31"/>
    </location>
    <ligand>
        <name>Mg(2+)</name>
        <dbReference type="ChEBI" id="CHEBI:18420"/>
    </ligand>
</feature>
<feature type="binding site" evidence="7">
    <location>
        <position position="33"/>
    </location>
    <ligand>
        <name>Mg(2+)</name>
        <dbReference type="ChEBI" id="CHEBI:18420"/>
    </ligand>
</feature>
<feature type="binding site" evidence="7">
    <location>
        <position position="91"/>
    </location>
    <ligand>
        <name>Mg(2+)</name>
        <dbReference type="ChEBI" id="CHEBI:18420"/>
    </ligand>
</feature>
<feature type="glycosylation site" description="N-linked (GlcNAc...) asparagine" evidence="8">
    <location>
        <position position="256"/>
    </location>
</feature>
<feature type="disulfide bond" evidence="5">
    <location>
        <begin position="51"/>
        <end position="57"/>
    </location>
</feature>
<feature type="disulfide bond" evidence="5">
    <location>
        <begin position="53"/>
        <end position="196"/>
    </location>
</feature>
<evidence type="ECO:0000250" key="1"/>
<evidence type="ECO:0000250" key="2">
    <source>
        <dbReference type="UniProtKB" id="A0A0D4WTV1"/>
    </source>
</evidence>
<evidence type="ECO:0000250" key="3">
    <source>
        <dbReference type="UniProtKB" id="A0A0D4WV12"/>
    </source>
</evidence>
<evidence type="ECO:0000250" key="4">
    <source>
        <dbReference type="UniProtKB" id="P0CE79"/>
    </source>
</evidence>
<evidence type="ECO:0000250" key="5">
    <source>
        <dbReference type="UniProtKB" id="P0CE80"/>
    </source>
</evidence>
<evidence type="ECO:0000250" key="6">
    <source>
        <dbReference type="UniProtKB" id="Q4ZFU2"/>
    </source>
</evidence>
<evidence type="ECO:0000250" key="7">
    <source>
        <dbReference type="UniProtKB" id="Q8I914"/>
    </source>
</evidence>
<evidence type="ECO:0000255" key="8"/>
<evidence type="ECO:0000303" key="9">
    <source>
    </source>
</evidence>
<evidence type="ECO:0000305" key="10"/>
<evidence type="ECO:0000305" key="11">
    <source>
    </source>
</evidence>
<proteinExistence type="evidence at transcript level"/>
<comment type="function">
    <text evidence="2 4 5">Dermonecrotic toxins cleave the phosphodiester linkage between the phosphate and headgroup of certain phospholipids (sphingolipid and lysolipid substrates), forming an alcohol (often choline) and a cyclic phosphate (By similarity). This toxin acts on sphingomyelin (SM) (By similarity). It also acts on a broad range of lysophospholipids, like lysophosphatidylinositol (LPI), lysophosphatidylglycerol (LPG), lysophosphatidylethanolamine (LPE), lysobisphosphatidic acid (LBPA), lysophosphatidylserine (LPS) and lysophosphatidylcholines (LPC) of varying chain lengths (By similarity). The substrate preference is LPI &gt; LPG &gt; LPS &gt; LPC &gt;&gt; LPE, LBPA (By similarity). Furthermore, the enzyme also act on cyclic phosphatidic acid and lyso-platelet activating factor (LPAF, an alkyl-LPC) (By similarity). The enzyme does not act on sphingosylphosphorylcholine (SPC, also known as lyso-sphingomyelin) and PAF (By similarity). The toxin may also act on ceramide phosphoethanolamine (CPE) (By similarity). It acts by transphosphatidylation, releasing exclusively cyclic phosphate products as second products (By similarity). It does not exhibit detectable PLA1/2 activity (By similarity). It induces dose-dependent hemolysis and dermonecrosis (By similarity). Also induces increased vascular permeability, edema, inflammatory response, and platelet aggregation (By similarity).</text>
</comment>
<comment type="catalytic activity">
    <reaction evidence="2">
        <text>an N-(acyl)-sphingosylphosphocholine = an N-(acyl)-sphingosyl-1,3-cyclic phosphate + choline</text>
        <dbReference type="Rhea" id="RHEA:60652"/>
        <dbReference type="ChEBI" id="CHEBI:15354"/>
        <dbReference type="ChEBI" id="CHEBI:64583"/>
        <dbReference type="ChEBI" id="CHEBI:143892"/>
    </reaction>
</comment>
<comment type="catalytic activity">
    <reaction evidence="2">
        <text>an N-(acyl)-sphingosylphosphoethanolamine = an N-(acyl)-sphingosyl-1,3-cyclic phosphate + ethanolamine</text>
        <dbReference type="Rhea" id="RHEA:60648"/>
        <dbReference type="ChEBI" id="CHEBI:57603"/>
        <dbReference type="ChEBI" id="CHEBI:143891"/>
        <dbReference type="ChEBI" id="CHEBI:143892"/>
    </reaction>
</comment>
<comment type="catalytic activity">
    <reaction evidence="2">
        <text>a 1-acyl-sn-glycero-3-phosphocholine = a 1-acyl-sn-glycero-2,3-cyclic phosphate + choline</text>
        <dbReference type="Rhea" id="RHEA:60700"/>
        <dbReference type="ChEBI" id="CHEBI:15354"/>
        <dbReference type="ChEBI" id="CHEBI:58168"/>
        <dbReference type="ChEBI" id="CHEBI:143947"/>
    </reaction>
</comment>
<comment type="catalytic activity">
    <reaction evidence="2">
        <text>a 1-acyl-sn-glycero-3-phosphoethanolamine = a 1-acyl-sn-glycero-2,3-cyclic phosphate + ethanolamine</text>
        <dbReference type="Rhea" id="RHEA:60704"/>
        <dbReference type="ChEBI" id="CHEBI:57603"/>
        <dbReference type="ChEBI" id="CHEBI:64381"/>
        <dbReference type="ChEBI" id="CHEBI:143947"/>
    </reaction>
</comment>
<comment type="cofactor">
    <cofactor evidence="7">
        <name>Mg(2+)</name>
        <dbReference type="ChEBI" id="CHEBI:18420"/>
    </cofactor>
    <text evidence="7">Binds 1 Mg(2+) ion per subunit.</text>
</comment>
<comment type="activity regulation">
    <text evidence="1">Inhibited with low affinity by edelfosine.</text>
</comment>
<comment type="subcellular location">
    <subcellularLocation>
        <location evidence="11">Secreted</location>
    </subcellularLocation>
</comment>
<comment type="tissue specificity">
    <text evidence="11">Expressed by the venom gland.</text>
</comment>
<comment type="similarity">
    <text evidence="10">Belongs to the arthropod phospholipase D family. Class II subfamily.</text>
</comment>
<comment type="caution">
    <text evidence="2 3 6">The most common activity assay for dermonecrotic toxins detects enzymatic activity by monitoring choline release from substrate. Liberation of choline from sphingomyelin (SM) or lysophosphatidylcholine (LPC) is commonly assumed to result from substrate hydrolysis, giving either ceramide-1-phosphate (C1P) or lysophosphatidic acid (LPA), respectively, as a second product. However, two studies from Lajoie and colleagues (2013 and 2015) report the observation of exclusive formation of cyclic phosphate products as second products, resulting from intramolecular transphosphatidylation. Cyclic phosphates have vastly different biological properties from their monoester counterparts, and they may be relevant to the pathology of brown spider envenomation.</text>
</comment>
<protein>
    <recommendedName>
        <fullName>Dermonecrotic toxin LrSicTox-alphaIA1i</fullName>
        <ecNumber evidence="6">4.6.1.-</ecNumber>
    </recommendedName>
    <alternativeName>
        <fullName evidence="9">Lr2</fullName>
    </alternativeName>
    <alternativeName>
        <fullName>Phospholipase D</fullName>
        <shortName>PLD</shortName>
    </alternativeName>
    <alternativeName>
        <fullName>SMaseD/LysoPLD</fullName>
    </alternativeName>
    <alternativeName>
        <fullName>Sphingomyelin phosphodiesterase D 2</fullName>
        <shortName>SMD 2</shortName>
        <shortName>SMase D 2</shortName>
        <shortName>Sphingomyelinase D 2</shortName>
    </alternativeName>
</protein>
<name>A1H1_LOXRE</name>
<reference key="1">
    <citation type="journal article" date="2004" name="Toxicon">
        <title>Genetic and enzymatic characterization of sphingomyelinase D isoforms from the North American fiddleback spiders Loxosceles boneti and Loxosceles reclusa.</title>
        <authorList>
            <person name="Ramos-Cerrillo B."/>
            <person name="Olvera A."/>
            <person name="Odell G.V."/>
            <person name="Zamudio F."/>
            <person name="Paniagua-Solis J."/>
            <person name="Alagon A."/>
            <person name="Stock R.P."/>
        </authorList>
    </citation>
    <scope>NUCLEOTIDE SEQUENCE [MRNA]</scope>
    <source>
        <tissue>Venom gland</tissue>
    </source>
</reference>
<organism>
    <name type="scientific">Loxosceles reclusa</name>
    <name type="common">Brown recluse spider</name>
    <dbReference type="NCBI Taxonomy" id="6921"/>
    <lineage>
        <taxon>Eukaryota</taxon>
        <taxon>Metazoa</taxon>
        <taxon>Ecdysozoa</taxon>
        <taxon>Arthropoda</taxon>
        <taxon>Chelicerata</taxon>
        <taxon>Arachnida</taxon>
        <taxon>Araneae</taxon>
        <taxon>Araneomorphae</taxon>
        <taxon>Haplogynae</taxon>
        <taxon>Scytodoidea</taxon>
        <taxon>Sicariidae</taxon>
        <taxon>Loxosceles</taxon>
    </lineage>
</organism>
<keyword id="KW-0204">Cytolysis</keyword>
<keyword id="KW-1061">Dermonecrotic toxin</keyword>
<keyword id="KW-1015">Disulfide bond</keyword>
<keyword id="KW-0325">Glycoprotein</keyword>
<keyword id="KW-0354">Hemolysis</keyword>
<keyword id="KW-0442">Lipid degradation</keyword>
<keyword id="KW-0443">Lipid metabolism</keyword>
<keyword id="KW-0456">Lyase</keyword>
<keyword id="KW-0460">Magnesium</keyword>
<keyword id="KW-0479">Metal-binding</keyword>
<keyword id="KW-0964">Secreted</keyword>
<keyword id="KW-0800">Toxin</keyword>
<accession>P0CE78</accession>
<accession>Q5I225</accession>
<accession>Q5YD74</accession>